<proteinExistence type="evidence at protein level"/>
<sequence>MREGRWVTVTESEFEHERRGLEAIRQKLPDGDPWRAWSNFTFTANTGHVREVDLLVVAPGGLCMVELKDWHGSVTSENGTWVQTTPGGRRRTHGNPLHLVNRKAKELAGLLAQPGAKRVWVAEAVCFTDNGLRVRLPAHDQNGVYTVDELVDMLKQAPSDERRRVTAIGSREVAAALKNIGIRKSDAQYKVGPYELERKSFDSGPTWADYLARHSDLPEAARVRIYLSERGSDASLRQSVENAARREAAVLGRFKHPGAVQLKQYFPSGHAAGPALIFDYHPHTQKLDEYLVQYGEKLDILGRMALVRQLAETVRSAHASRIHHRALAARSVLVVPRSRGGKGRAVGEEAAWLTPQLQISDWQIATQRSGDSSQGQGMTRFAPTALSAMHLADDADAYLAPELTALNPDPVYLDVYGLGVLTYLLVTGKAPAASQAELLARLEAGEGLRPSSLVDGLSEDVDELVQAATAYRPGQRLSSVDEFLELLEVVEDSLTAPAAALDGPAEDETGASADKDPLEVVAGDLLAGRWEVRRRLGTGSTSRAFLVRDLEAETRRTRPLAVLKVALSDSRGEILVREAEAMRRLRPHSGIIRLAEPEPLHIGGRTVLALEYVGDERDDDGPGAEGATRPRRREETVARQLREHGRLPVDQLEAYGDYLFGAVDFLEGEGIWHRDIKPDNIAVRIRPNRTRELVLIDFSLAGYPAKNTDAGTDGYLDPFVDVITRGSYDSHAERYAVAVTLHQMASGELPKWGDGSVLPRMTDPKEWPYPTIAAEAFDPAVRDGLVAFFQKALHRDAGKRFPELKPMRDAWRKVFLDASQTVPSSHRTRPAAPADGAAPAEGAAAGIADAEPETAEQQRDRLAAEVTRDTPLTVSGLTPAAQSFLYGLGITTVGELLDYSRRKLVNAPGLGAKTRNEVQQRQREWGERLREAPVSPLTPKGRAEAKEELEQLTAAESALVGQLATGESAGALSARTLRSVSLDTLATVLVPAVNNNGSNRNKAEMVRLLLRLPDEHGVLPGIGVWPKQKDVADALGLSHGRIPQMLKDERKRWKAEPAVQALRDEIIELLASMGRVASAVEIADALAVRRGTHLAGREQRRAMALAAVRAVVEVEQLVPQEVEFQHQPNRKATDESLGAGLLALDVREDDAPDTPTAPGLLDYATRLGKTADRLARLDTLPTAATVLAELGALTVPPGAVDWDERRMVELAAAASVNAAATPRLEIYPRDLSLVRALRLTQAGLVRWIPGVPEGRQPGLTGEDVHERVRARFPELVVPDGRGGTAHELPTAGPLTKALRDAGFELSLSMREDTGTLRYLPTRVDEASSYLTTGAWRQSTRTGTVTRYADDPQLAGAVRAEERLLASAHRDGYRVLTVRQQLVRDAVRELGAERLGGQAVSVTELFLEALHGQVTPGTKPTWETLLKADAAEPGSKGAVRFAEYARTAWGSVEPRIAELLGDGGGGAGPVLLTEAGVFARYDAMGVLDRLASAARRGGRGLWLLVPQSDPSREPRLGQVAVPYQAGLGEWIQLPDTWVGNRHRGSGEVVASGVEGDAK</sequence>
<feature type="chain" id="PRO_0000452169" description="Probable kinase PglW">
    <location>
        <begin position="1"/>
        <end position="1557"/>
    </location>
</feature>
<feature type="domain" description="NERD" evidence="2">
    <location>
        <begin position="12"/>
        <end position="130"/>
    </location>
</feature>
<feature type="domain" description="Protein kinase 1" evidence="1">
    <location>
        <begin position="195"/>
        <end position="490"/>
    </location>
</feature>
<feature type="domain" description="Protein kinase 2" evidence="1">
    <location>
        <begin position="530"/>
        <end position="816"/>
    </location>
</feature>
<feature type="region of interest" description="Disordered" evidence="3">
    <location>
        <begin position="615"/>
        <end position="634"/>
    </location>
</feature>
<feature type="region of interest" description="Disordered" evidence="3">
    <location>
        <begin position="821"/>
        <end position="861"/>
    </location>
</feature>
<feature type="compositionally biased region" description="Low complexity" evidence="3">
    <location>
        <begin position="830"/>
        <end position="849"/>
    </location>
</feature>
<feature type="binding site" evidence="1">
    <location>
        <begin position="536"/>
        <end position="544"/>
    </location>
    <ligand>
        <name>ATP</name>
        <dbReference type="ChEBI" id="CHEBI:30616"/>
    </ligand>
</feature>
<feature type="binding site" evidence="1">
    <location>
        <position position="564"/>
    </location>
    <ligand>
        <name>ATP</name>
        <dbReference type="ChEBI" id="CHEBI:30616"/>
    </ligand>
</feature>
<feature type="mutagenesis site" description="Does not complement the Pgl- phenotype of a deletion mutation, does not autophosphorylate." evidence="5">
    <original>K</original>
    <variation>A</variation>
    <location>
        <position position="677"/>
    </location>
</feature>
<protein>
    <recommendedName>
        <fullName evidence="7">Probable kinase PglW</fullName>
    </recommendedName>
    <alternativeName>
        <fullName evidence="7">Bacteriophage (PhiC31) resistance gene PglW</fullName>
    </alternativeName>
</protein>
<accession>O86560</accession>
<gene>
    <name evidence="7" type="primary">pglW</name>
    <name type="synonym">SC1F2.23</name>
    <name type="ordered locus">SCO6626</name>
</gene>
<comment type="function">
    <text evidence="4 6 9 10">BREX systems (bacteriophage exclusion) provide immunity against bacteriophage. Part of a type 2 BREX system (Probable). Previously called the phage growth limitation (Pgl) system, it confers protection against bacteriophage phiC31. The bacteria allows one cycle of phage infection, but subsequent cycles are impaired, protecting the original bacterial colony (Probable). The system undergoes high rates (10(-3) to 10(-4)) of phase reversion, i.e. loss and regain of phiC31 resistance (PubMed:8446035). When the pglW-pglX-pglY-pglZ genes are transformed into a susceptible S.lividans (strain 1326) they confer resistance to infection by phage phiC31 and phiBT1; all 4 genes are necessary (PubMed:11972785). The proteins has kinase domains and might bind DNA (Probable).</text>
</comment>
<comment type="function">
    <text evidence="5">Autophosphorylates when synthesized in vitro, cannot be expressed in E.coli.</text>
</comment>
<comment type="induction">
    <text evidence="4">Constitutively expressed, probably part of a pglW-pglX operon.</text>
</comment>
<comment type="domain">
    <text evidence="1">The first protein kinase domain is predicted to be catalytically inactive.</text>
</comment>
<comment type="disruption phenotype">
    <text evidence="4">Strain is no longer resistant to plaque formation by bacteriophage phiC31 (a Pgl- phenotype).</text>
</comment>
<comment type="similarity">
    <text evidence="8">Belongs to the protein kinase superfamily. Ser/Thr protein kinase family.</text>
</comment>
<reference key="1">
    <citation type="journal article" date="2002" name="Nature">
        <title>Complete genome sequence of the model actinomycete Streptomyces coelicolor A3(2).</title>
        <authorList>
            <person name="Bentley S.D."/>
            <person name="Chater K.F."/>
            <person name="Cerdeno-Tarraga A.-M."/>
            <person name="Challis G.L."/>
            <person name="Thomson N.R."/>
            <person name="James K.D."/>
            <person name="Harris D.E."/>
            <person name="Quail M.A."/>
            <person name="Kieser H."/>
            <person name="Harper D."/>
            <person name="Bateman A."/>
            <person name="Brown S."/>
            <person name="Chandra G."/>
            <person name="Chen C.W."/>
            <person name="Collins M."/>
            <person name="Cronin A."/>
            <person name="Fraser A."/>
            <person name="Goble A."/>
            <person name="Hidalgo J."/>
            <person name="Hornsby T."/>
            <person name="Howarth S."/>
            <person name="Huang C.-H."/>
            <person name="Kieser T."/>
            <person name="Larke L."/>
            <person name="Murphy L.D."/>
            <person name="Oliver K."/>
            <person name="O'Neil S."/>
            <person name="Rabbinowitsch E."/>
            <person name="Rajandream M.A."/>
            <person name="Rutherford K.M."/>
            <person name="Rutter S."/>
            <person name="Seeger K."/>
            <person name="Saunders D."/>
            <person name="Sharp S."/>
            <person name="Squares R."/>
            <person name="Squares S."/>
            <person name="Taylor K."/>
            <person name="Warren T."/>
            <person name="Wietzorrek A."/>
            <person name="Woodward J.R."/>
            <person name="Barrell B.G."/>
            <person name="Parkhill J."/>
            <person name="Hopwood D.A."/>
        </authorList>
    </citation>
    <scope>NUCLEOTIDE SEQUENCE [LARGE SCALE GENOMIC DNA]</scope>
    <source>
        <strain>ATCC BAA-471 / A3(2) / M145</strain>
    </source>
</reference>
<reference key="2">
    <citation type="journal article" date="1993" name="Mol. Microbiol.">
        <title>Genetic analysis of the phi C31-specific phage growth limitation (Pgl) system of Streptomyces coelicolor A3(2).</title>
        <authorList>
            <person name="Laity C."/>
            <person name="Chater K.F."/>
            <person name="Lewis C.G."/>
            <person name="Buttner M.J."/>
        </authorList>
    </citation>
    <scope>GENETIC ANALYSIS</scope>
    <scope>PHASE REVERSION</scope>
    <source>
        <strain>ATCC BAA-471 / A3(2) / M145</strain>
    </source>
</reference>
<reference key="3">
    <citation type="journal article" date="2002" name="Mol. Microbiol.">
        <title>Genetics of the phage growth limitation (Pgl) system of Streptomyces coelicolor A3(2).</title>
        <authorList>
            <person name="Sumby P."/>
            <person name="Smith M.C."/>
        </authorList>
    </citation>
    <scope>FUNCTION IN ANTIVIRAL DEFENSE</scope>
    <scope>INDUCTION</scope>
    <scope>DISRUPTION PHENOTYPE</scope>
    <source>
        <strain>ATCC BAA-471 / A3(2) / M145</strain>
    </source>
</reference>
<reference key="4">
    <citation type="journal article" date="2015" name="EMBO J.">
        <title>BREX is a novel phage resistance system widespread in microbial genomes.</title>
        <authorList>
            <person name="Goldfarb T."/>
            <person name="Sberro H."/>
            <person name="Weinstock E."/>
            <person name="Cohen O."/>
            <person name="Doron S."/>
            <person name="Charpak-Amikam Y."/>
            <person name="Afik S."/>
            <person name="Ofir G."/>
            <person name="Sorek R."/>
        </authorList>
    </citation>
    <scope>CLASSIFICATION AND NOMENCLATURE</scope>
</reference>
<reference key="5">
    <citation type="journal article" date="2015" name="Virology">
        <title>The phage growth limitation system in Streptomyces coelicolor A(3)2 is a toxin/antitoxin system, comprising enzymes with DNA methyltransferase, protein kinase and ATPase activity.</title>
        <authorList>
            <person name="Hoskisson P.A."/>
            <person name="Sumby P."/>
            <person name="Smith M.C.M."/>
        </authorList>
    </citation>
    <scope>FUNCTION AS A KINASE</scope>
    <scope>MUTAGENESIS OF LYS-677</scope>
    <source>
        <strain>ATCC BAA-471 / A3(2) / M145</strain>
    </source>
</reference>
<name>PGLW_STRCO</name>
<keyword id="KW-0051">Antiviral defense</keyword>
<keyword id="KW-0067">ATP-binding</keyword>
<keyword id="KW-0418">Kinase</keyword>
<keyword id="KW-0547">Nucleotide-binding</keyword>
<keyword id="KW-1185">Reference proteome</keyword>
<keyword id="KW-0677">Repeat</keyword>
<keyword id="KW-0808">Transferase</keyword>
<dbReference type="EMBL" id="AL939128">
    <property type="protein sequence ID" value="CAA20514.1"/>
    <property type="molecule type" value="Genomic_DNA"/>
</dbReference>
<dbReference type="PIR" id="T29132">
    <property type="entry name" value="T29132"/>
</dbReference>
<dbReference type="RefSeq" id="NP_630703.1">
    <property type="nucleotide sequence ID" value="NC_003888.3"/>
</dbReference>
<dbReference type="RefSeq" id="WP_011031052.1">
    <property type="nucleotide sequence ID" value="NZ_VNID01000002.1"/>
</dbReference>
<dbReference type="SMR" id="O86560"/>
<dbReference type="STRING" id="100226.gene:17764284"/>
<dbReference type="PaxDb" id="100226-SCO6626"/>
<dbReference type="KEGG" id="sco:SCO6626"/>
<dbReference type="PATRIC" id="fig|100226.15.peg.6734"/>
<dbReference type="eggNOG" id="COG0515">
    <property type="taxonomic scope" value="Bacteria"/>
</dbReference>
<dbReference type="HOGENOM" id="CLU_005315_0_0_11"/>
<dbReference type="InParanoid" id="O86560"/>
<dbReference type="OrthoDB" id="3404503at2"/>
<dbReference type="Proteomes" id="UP000001973">
    <property type="component" value="Chromosome"/>
</dbReference>
<dbReference type="GO" id="GO:0005524">
    <property type="term" value="F:ATP binding"/>
    <property type="evidence" value="ECO:0007669"/>
    <property type="project" value="UniProtKB-KW"/>
</dbReference>
<dbReference type="GO" id="GO:0004674">
    <property type="term" value="F:protein serine/threonine kinase activity"/>
    <property type="evidence" value="ECO:0000318"/>
    <property type="project" value="GO_Central"/>
</dbReference>
<dbReference type="GO" id="GO:0051607">
    <property type="term" value="P:defense response to virus"/>
    <property type="evidence" value="ECO:0007669"/>
    <property type="project" value="UniProtKB-KW"/>
</dbReference>
<dbReference type="Gene3D" id="1.10.150.20">
    <property type="entry name" value="5' to 3' exonuclease, C-terminal subdomain"/>
    <property type="match status" value="1"/>
</dbReference>
<dbReference type="Gene3D" id="3.30.200.20">
    <property type="entry name" value="Phosphorylase Kinase, domain 1"/>
    <property type="match status" value="1"/>
</dbReference>
<dbReference type="Gene3D" id="1.10.510.10">
    <property type="entry name" value="Transferase(Phosphotransferase) domain 1"/>
    <property type="match status" value="2"/>
</dbReference>
<dbReference type="InterPro" id="IPR049832">
    <property type="entry name" value="BREX_PglW"/>
</dbReference>
<dbReference type="InterPro" id="IPR011009">
    <property type="entry name" value="Kinase-like_dom_sf"/>
</dbReference>
<dbReference type="InterPro" id="IPR011528">
    <property type="entry name" value="NERD"/>
</dbReference>
<dbReference type="InterPro" id="IPR000719">
    <property type="entry name" value="Prot_kinase_dom"/>
</dbReference>
<dbReference type="InterPro" id="IPR017441">
    <property type="entry name" value="Protein_kinase_ATP_BS"/>
</dbReference>
<dbReference type="NCBIfam" id="NF033442">
    <property type="entry name" value="BREX_PglW"/>
    <property type="match status" value="1"/>
</dbReference>
<dbReference type="PANTHER" id="PTHR43289">
    <property type="entry name" value="MITOGEN-ACTIVATED PROTEIN KINASE KINASE KINASE 20-RELATED"/>
    <property type="match status" value="1"/>
</dbReference>
<dbReference type="PANTHER" id="PTHR43289:SF34">
    <property type="entry name" value="SERINE_THREONINE-PROTEIN KINASE YBDM-RELATED"/>
    <property type="match status" value="1"/>
</dbReference>
<dbReference type="Pfam" id="PF08378">
    <property type="entry name" value="NERD"/>
    <property type="match status" value="1"/>
</dbReference>
<dbReference type="Pfam" id="PF00069">
    <property type="entry name" value="Pkinase"/>
    <property type="match status" value="2"/>
</dbReference>
<dbReference type="SMART" id="SM00220">
    <property type="entry name" value="S_TKc"/>
    <property type="match status" value="1"/>
</dbReference>
<dbReference type="SUPFAM" id="SSF47789">
    <property type="entry name" value="C-terminal domain of RNA polymerase alpha subunit"/>
    <property type="match status" value="1"/>
</dbReference>
<dbReference type="SUPFAM" id="SSF56112">
    <property type="entry name" value="Protein kinase-like (PK-like)"/>
    <property type="match status" value="2"/>
</dbReference>
<dbReference type="PROSITE" id="PS50965">
    <property type="entry name" value="NERD"/>
    <property type="match status" value="1"/>
</dbReference>
<dbReference type="PROSITE" id="PS00107">
    <property type="entry name" value="PROTEIN_KINASE_ATP"/>
    <property type="match status" value="1"/>
</dbReference>
<dbReference type="PROSITE" id="PS50011">
    <property type="entry name" value="PROTEIN_KINASE_DOM"/>
    <property type="match status" value="2"/>
</dbReference>
<organism>
    <name type="scientific">Streptomyces coelicolor (strain ATCC BAA-471 / A3(2) / M145)</name>
    <dbReference type="NCBI Taxonomy" id="100226"/>
    <lineage>
        <taxon>Bacteria</taxon>
        <taxon>Bacillati</taxon>
        <taxon>Actinomycetota</taxon>
        <taxon>Actinomycetes</taxon>
        <taxon>Kitasatosporales</taxon>
        <taxon>Streptomycetaceae</taxon>
        <taxon>Streptomyces</taxon>
        <taxon>Streptomyces albidoflavus group</taxon>
    </lineage>
</organism>
<evidence type="ECO:0000255" key="1">
    <source>
        <dbReference type="PROSITE-ProRule" id="PRU00159"/>
    </source>
</evidence>
<evidence type="ECO:0000255" key="2">
    <source>
        <dbReference type="PROSITE-ProRule" id="PRU00327"/>
    </source>
</evidence>
<evidence type="ECO:0000256" key="3">
    <source>
        <dbReference type="SAM" id="MobiDB-lite"/>
    </source>
</evidence>
<evidence type="ECO:0000269" key="4">
    <source>
    </source>
</evidence>
<evidence type="ECO:0000269" key="5">
    <source>
    </source>
</evidence>
<evidence type="ECO:0000269" key="6">
    <source>
    </source>
</evidence>
<evidence type="ECO:0000303" key="7">
    <source>
    </source>
</evidence>
<evidence type="ECO:0000305" key="8"/>
<evidence type="ECO:0000305" key="9">
    <source>
    </source>
</evidence>
<evidence type="ECO:0000305" key="10">
    <source>
    </source>
</evidence>